<gene>
    <name evidence="1" type="primary">murC</name>
    <name type="ordered locus">LCABL_19300</name>
</gene>
<name>MURC_LACCB</name>
<proteinExistence type="inferred from homology"/>
<reference key="1">
    <citation type="submission" date="2008-06" db="EMBL/GenBank/DDBJ databases">
        <title>Lactobacillus casei BL23 complete genome sequence.</title>
        <authorList>
            <person name="Maze A."/>
            <person name="Boel G."/>
            <person name="Bourand A."/>
            <person name="Loux V."/>
            <person name="Gibrat J.F."/>
            <person name="Zuniga M."/>
            <person name="Hartke A."/>
            <person name="Deutscher J."/>
        </authorList>
    </citation>
    <scope>NUCLEOTIDE SEQUENCE [LARGE SCALE GENOMIC DNA]</scope>
    <source>
        <strain>BL23</strain>
    </source>
</reference>
<sequence>MTEATYYFIGIKGSGMSALALVLHDLGHQVLGSDITQYTFTQKGLAAAGIKMLPFDPANLKPGYTVIAGNSFTDDHPEIKRAKELGLTIYRYHEFLGKLIEGYTSIGVAGAHGKTSTTGLLAHTLSGVAKTSYLIGDGTGKGIPDSQFFVFEADEYRRHFLAYHPDYMIMTNIDFDHPDYYTGFEDVYDAFETEANQVKKAIVAWGDDPWLRKLKAKVPVYYYGISDRDDFRARNVDRDTKGSSFDAYFHDQLIGHFFVPLFGEHSVLNALAVVAVAHMEKLDAKLIARELGNFSGVKRRFAEKDLKDMIIVDDYAHHPNEIKATLDAARQKYPDKAIIAVFQPHTFSRTQAYEPQYVQVLSQADQTFLTPIFSSAREKTGKIRSEDITAQIKGAAVIHQEDMKPLLQYHNAVVVFMGAGDIQKYEKAYETLLAEE</sequence>
<evidence type="ECO:0000255" key="1">
    <source>
        <dbReference type="HAMAP-Rule" id="MF_00046"/>
    </source>
</evidence>
<feature type="chain" id="PRO_1000091109" description="UDP-N-acetylmuramate--L-alanine ligase">
    <location>
        <begin position="1"/>
        <end position="436"/>
    </location>
</feature>
<feature type="binding site" evidence="1">
    <location>
        <begin position="110"/>
        <end position="116"/>
    </location>
    <ligand>
        <name>ATP</name>
        <dbReference type="ChEBI" id="CHEBI:30616"/>
    </ligand>
</feature>
<accession>B3WF58</accession>
<keyword id="KW-0067">ATP-binding</keyword>
<keyword id="KW-0131">Cell cycle</keyword>
<keyword id="KW-0132">Cell division</keyword>
<keyword id="KW-0133">Cell shape</keyword>
<keyword id="KW-0961">Cell wall biogenesis/degradation</keyword>
<keyword id="KW-0963">Cytoplasm</keyword>
<keyword id="KW-0436">Ligase</keyword>
<keyword id="KW-0547">Nucleotide-binding</keyword>
<keyword id="KW-0573">Peptidoglycan synthesis</keyword>
<dbReference type="EC" id="6.3.2.8" evidence="1"/>
<dbReference type="EMBL" id="FM177140">
    <property type="protein sequence ID" value="CAQ67009.1"/>
    <property type="molecule type" value="Genomic_DNA"/>
</dbReference>
<dbReference type="SMR" id="B3WF58"/>
<dbReference type="KEGG" id="lcb:LCABL_19300"/>
<dbReference type="HOGENOM" id="CLU_028104_1_0_9"/>
<dbReference type="UniPathway" id="UPA00219"/>
<dbReference type="GO" id="GO:0005737">
    <property type="term" value="C:cytoplasm"/>
    <property type="evidence" value="ECO:0007669"/>
    <property type="project" value="UniProtKB-SubCell"/>
</dbReference>
<dbReference type="GO" id="GO:0005524">
    <property type="term" value="F:ATP binding"/>
    <property type="evidence" value="ECO:0007669"/>
    <property type="project" value="UniProtKB-UniRule"/>
</dbReference>
<dbReference type="GO" id="GO:0008763">
    <property type="term" value="F:UDP-N-acetylmuramate-L-alanine ligase activity"/>
    <property type="evidence" value="ECO:0007669"/>
    <property type="project" value="UniProtKB-UniRule"/>
</dbReference>
<dbReference type="GO" id="GO:0051301">
    <property type="term" value="P:cell division"/>
    <property type="evidence" value="ECO:0007669"/>
    <property type="project" value="UniProtKB-KW"/>
</dbReference>
<dbReference type="GO" id="GO:0071555">
    <property type="term" value="P:cell wall organization"/>
    <property type="evidence" value="ECO:0007669"/>
    <property type="project" value="UniProtKB-KW"/>
</dbReference>
<dbReference type="GO" id="GO:0009252">
    <property type="term" value="P:peptidoglycan biosynthetic process"/>
    <property type="evidence" value="ECO:0007669"/>
    <property type="project" value="UniProtKB-UniRule"/>
</dbReference>
<dbReference type="GO" id="GO:0008360">
    <property type="term" value="P:regulation of cell shape"/>
    <property type="evidence" value="ECO:0007669"/>
    <property type="project" value="UniProtKB-KW"/>
</dbReference>
<dbReference type="Gene3D" id="3.90.190.20">
    <property type="entry name" value="Mur ligase, C-terminal domain"/>
    <property type="match status" value="1"/>
</dbReference>
<dbReference type="Gene3D" id="3.40.1190.10">
    <property type="entry name" value="Mur-like, catalytic domain"/>
    <property type="match status" value="1"/>
</dbReference>
<dbReference type="Gene3D" id="3.40.50.720">
    <property type="entry name" value="NAD(P)-binding Rossmann-like Domain"/>
    <property type="match status" value="1"/>
</dbReference>
<dbReference type="HAMAP" id="MF_00046">
    <property type="entry name" value="MurC"/>
    <property type="match status" value="1"/>
</dbReference>
<dbReference type="InterPro" id="IPR036565">
    <property type="entry name" value="Mur-like_cat_sf"/>
</dbReference>
<dbReference type="InterPro" id="IPR004101">
    <property type="entry name" value="Mur_ligase_C"/>
</dbReference>
<dbReference type="InterPro" id="IPR036615">
    <property type="entry name" value="Mur_ligase_C_dom_sf"/>
</dbReference>
<dbReference type="InterPro" id="IPR013221">
    <property type="entry name" value="Mur_ligase_cen"/>
</dbReference>
<dbReference type="InterPro" id="IPR000713">
    <property type="entry name" value="Mur_ligase_N"/>
</dbReference>
<dbReference type="InterPro" id="IPR050061">
    <property type="entry name" value="MurCDEF_pg_biosynth"/>
</dbReference>
<dbReference type="InterPro" id="IPR005758">
    <property type="entry name" value="UDP-N-AcMur_Ala_ligase_MurC"/>
</dbReference>
<dbReference type="NCBIfam" id="TIGR01082">
    <property type="entry name" value="murC"/>
    <property type="match status" value="1"/>
</dbReference>
<dbReference type="PANTHER" id="PTHR43445:SF3">
    <property type="entry name" value="UDP-N-ACETYLMURAMATE--L-ALANINE LIGASE"/>
    <property type="match status" value="1"/>
</dbReference>
<dbReference type="PANTHER" id="PTHR43445">
    <property type="entry name" value="UDP-N-ACETYLMURAMATE--L-ALANINE LIGASE-RELATED"/>
    <property type="match status" value="1"/>
</dbReference>
<dbReference type="Pfam" id="PF01225">
    <property type="entry name" value="Mur_ligase"/>
    <property type="match status" value="1"/>
</dbReference>
<dbReference type="Pfam" id="PF02875">
    <property type="entry name" value="Mur_ligase_C"/>
    <property type="match status" value="1"/>
</dbReference>
<dbReference type="Pfam" id="PF08245">
    <property type="entry name" value="Mur_ligase_M"/>
    <property type="match status" value="1"/>
</dbReference>
<dbReference type="SUPFAM" id="SSF51984">
    <property type="entry name" value="MurCD N-terminal domain"/>
    <property type="match status" value="1"/>
</dbReference>
<dbReference type="SUPFAM" id="SSF53623">
    <property type="entry name" value="MurD-like peptide ligases, catalytic domain"/>
    <property type="match status" value="1"/>
</dbReference>
<dbReference type="SUPFAM" id="SSF53244">
    <property type="entry name" value="MurD-like peptide ligases, peptide-binding domain"/>
    <property type="match status" value="1"/>
</dbReference>
<comment type="function">
    <text evidence="1">Cell wall formation.</text>
</comment>
<comment type="catalytic activity">
    <reaction evidence="1">
        <text>UDP-N-acetyl-alpha-D-muramate + L-alanine + ATP = UDP-N-acetyl-alpha-D-muramoyl-L-alanine + ADP + phosphate + H(+)</text>
        <dbReference type="Rhea" id="RHEA:23372"/>
        <dbReference type="ChEBI" id="CHEBI:15378"/>
        <dbReference type="ChEBI" id="CHEBI:30616"/>
        <dbReference type="ChEBI" id="CHEBI:43474"/>
        <dbReference type="ChEBI" id="CHEBI:57972"/>
        <dbReference type="ChEBI" id="CHEBI:70757"/>
        <dbReference type="ChEBI" id="CHEBI:83898"/>
        <dbReference type="ChEBI" id="CHEBI:456216"/>
        <dbReference type="EC" id="6.3.2.8"/>
    </reaction>
</comment>
<comment type="pathway">
    <text evidence="1">Cell wall biogenesis; peptidoglycan biosynthesis.</text>
</comment>
<comment type="subcellular location">
    <subcellularLocation>
        <location evidence="1">Cytoplasm</location>
    </subcellularLocation>
</comment>
<comment type="similarity">
    <text evidence="1">Belongs to the MurCDEF family.</text>
</comment>
<protein>
    <recommendedName>
        <fullName evidence="1">UDP-N-acetylmuramate--L-alanine ligase</fullName>
        <ecNumber evidence="1">6.3.2.8</ecNumber>
    </recommendedName>
    <alternativeName>
        <fullName evidence="1">UDP-N-acetylmuramoyl-L-alanine synthetase</fullName>
    </alternativeName>
</protein>
<organism>
    <name type="scientific">Lacticaseibacillus casei (strain BL23)</name>
    <name type="common">Lactobacillus casei</name>
    <dbReference type="NCBI Taxonomy" id="543734"/>
    <lineage>
        <taxon>Bacteria</taxon>
        <taxon>Bacillati</taxon>
        <taxon>Bacillota</taxon>
        <taxon>Bacilli</taxon>
        <taxon>Lactobacillales</taxon>
        <taxon>Lactobacillaceae</taxon>
        <taxon>Lacticaseibacillus</taxon>
    </lineage>
</organism>